<organism>
    <name type="scientific">Phaeodactylum tricornutum (strain CCAP 1055/1)</name>
    <dbReference type="NCBI Taxonomy" id="556484"/>
    <lineage>
        <taxon>Eukaryota</taxon>
        <taxon>Sar</taxon>
        <taxon>Stramenopiles</taxon>
        <taxon>Ochrophyta</taxon>
        <taxon>Bacillariophyta</taxon>
        <taxon>Bacillariophyceae</taxon>
        <taxon>Bacillariophycidae</taxon>
        <taxon>Naviculales</taxon>
        <taxon>Phaeodactylaceae</taxon>
        <taxon>Phaeodactylum</taxon>
    </lineage>
</organism>
<dbReference type="EMBL" id="EF067920">
    <property type="protein sequence ID" value="ABK20701.1"/>
    <property type="molecule type" value="Genomic_DNA"/>
</dbReference>
<dbReference type="RefSeq" id="YP_874478.1">
    <property type="nucleotide sequence ID" value="NC_008588.1"/>
</dbReference>
<dbReference type="STRING" id="556484.A0T0K3"/>
<dbReference type="GeneID" id="4524653"/>
<dbReference type="InParanoid" id="A0T0K3"/>
<dbReference type="Proteomes" id="UP000000759">
    <property type="component" value="Chloroplast"/>
</dbReference>
<dbReference type="GO" id="GO:0009507">
    <property type="term" value="C:chloroplast"/>
    <property type="evidence" value="ECO:0007669"/>
    <property type="project" value="UniProtKB-SubCell"/>
</dbReference>
<dbReference type="GO" id="GO:1990904">
    <property type="term" value="C:ribonucleoprotein complex"/>
    <property type="evidence" value="ECO:0007669"/>
    <property type="project" value="UniProtKB-KW"/>
</dbReference>
<dbReference type="GO" id="GO:0005840">
    <property type="term" value="C:ribosome"/>
    <property type="evidence" value="ECO:0007669"/>
    <property type="project" value="UniProtKB-KW"/>
</dbReference>
<dbReference type="GO" id="GO:0019843">
    <property type="term" value="F:rRNA binding"/>
    <property type="evidence" value="ECO:0007669"/>
    <property type="project" value="UniProtKB-KW"/>
</dbReference>
<dbReference type="GO" id="GO:0003735">
    <property type="term" value="F:structural constituent of ribosome"/>
    <property type="evidence" value="ECO:0007669"/>
    <property type="project" value="InterPro"/>
</dbReference>
<dbReference type="GO" id="GO:0006412">
    <property type="term" value="P:translation"/>
    <property type="evidence" value="ECO:0007669"/>
    <property type="project" value="InterPro"/>
</dbReference>
<dbReference type="Gene3D" id="4.10.830.30">
    <property type="entry name" value="Ribosomal protein L31"/>
    <property type="match status" value="1"/>
</dbReference>
<dbReference type="InterPro" id="IPR034704">
    <property type="entry name" value="Ribosomal_bL28/bL31-like_sf"/>
</dbReference>
<dbReference type="InterPro" id="IPR002150">
    <property type="entry name" value="Ribosomal_bL31"/>
</dbReference>
<dbReference type="InterPro" id="IPR042105">
    <property type="entry name" value="Ribosomal_bL31_sf"/>
</dbReference>
<dbReference type="NCBIfam" id="TIGR00105">
    <property type="entry name" value="L31"/>
    <property type="match status" value="1"/>
</dbReference>
<dbReference type="NCBIfam" id="NF001809">
    <property type="entry name" value="PRK00528.1"/>
    <property type="match status" value="1"/>
</dbReference>
<dbReference type="PANTHER" id="PTHR33280">
    <property type="entry name" value="50S RIBOSOMAL PROTEIN L31, CHLOROPLASTIC"/>
    <property type="match status" value="1"/>
</dbReference>
<dbReference type="PANTHER" id="PTHR33280:SF1">
    <property type="entry name" value="LARGE RIBOSOMAL SUBUNIT PROTEIN BL31C"/>
    <property type="match status" value="1"/>
</dbReference>
<dbReference type="Pfam" id="PF01197">
    <property type="entry name" value="Ribosomal_L31"/>
    <property type="match status" value="1"/>
</dbReference>
<dbReference type="PRINTS" id="PR01249">
    <property type="entry name" value="RIBOSOMALL31"/>
</dbReference>
<dbReference type="SUPFAM" id="SSF143800">
    <property type="entry name" value="L28p-like"/>
    <property type="match status" value="1"/>
</dbReference>
<evidence type="ECO:0000250" key="1"/>
<evidence type="ECO:0000305" key="2"/>
<feature type="chain" id="PRO_0000277159" description="Large ribosomal subunit protein bL31c">
    <location>
        <begin position="1"/>
        <end position="72"/>
    </location>
</feature>
<reference key="1">
    <citation type="journal article" date="2007" name="Mol. Genet. Genomics">
        <title>Chloroplast genomes of the diatoms Phaeodactylum tricornutum and Thalassiosira pseudonana: comparison with other plastid genomes of the red lineage.</title>
        <authorList>
            <person name="Oudot-Le Secq M.-P."/>
            <person name="Grimwood J."/>
            <person name="Shapiro H."/>
            <person name="Armbrust E.V."/>
            <person name="Bowler C."/>
            <person name="Green B.R."/>
        </authorList>
    </citation>
    <scope>NUCLEOTIDE SEQUENCE [LARGE SCALE GENOMIC DNA]</scope>
    <source>
        <strain>CCAP 1055/1</strain>
    </source>
</reference>
<accession>A0T0K3</accession>
<keyword id="KW-0150">Chloroplast</keyword>
<keyword id="KW-0934">Plastid</keyword>
<keyword id="KW-1185">Reference proteome</keyword>
<keyword id="KW-0687">Ribonucleoprotein</keyword>
<keyword id="KW-0689">Ribosomal protein</keyword>
<keyword id="KW-0694">RNA-binding</keyword>
<keyword id="KW-0699">rRNA-binding</keyword>
<protein>
    <recommendedName>
        <fullName evidence="2">Large ribosomal subunit protein bL31c</fullName>
    </recommendedName>
    <alternativeName>
        <fullName>50S ribosomal protein L31, chloroplastic</fullName>
    </alternativeName>
</protein>
<gene>
    <name type="primary">rpl31</name>
</gene>
<proteinExistence type="inferred from homology"/>
<name>RK31_PHATC</name>
<geneLocation type="chloroplast"/>
<sequence>MPKSDIHPTWFENTKVLCDGKPLCLIGSTKSELQIDMWLANHPFYTNSQVLIDSEGRVEKFMKKYRLDITEQ</sequence>
<comment type="function">
    <text evidence="1">Binds the 23S rRNA.</text>
</comment>
<comment type="subunit">
    <text evidence="1">Part of the 50S ribosomal subunit.</text>
</comment>
<comment type="subcellular location">
    <subcellularLocation>
        <location>Plastid</location>
        <location>Chloroplast</location>
    </subcellularLocation>
</comment>
<comment type="similarity">
    <text evidence="2">Belongs to the bacterial ribosomal protein bL31 family. Type A subfamily.</text>
</comment>